<accession>Q67Q54</accession>
<evidence type="ECO:0000255" key="1">
    <source>
        <dbReference type="HAMAP-Rule" id="MF_01210"/>
    </source>
</evidence>
<reference key="1">
    <citation type="journal article" date="2004" name="Nucleic Acids Res.">
        <title>Genome sequence of Symbiobacterium thermophilum, an uncultivable bacterium that depends on microbial commensalism.</title>
        <authorList>
            <person name="Ueda K."/>
            <person name="Yamashita A."/>
            <person name="Ishikawa J."/>
            <person name="Shimada M."/>
            <person name="Watsuji T."/>
            <person name="Morimura K."/>
            <person name="Ikeda H."/>
            <person name="Hattori M."/>
            <person name="Beppu T."/>
        </authorList>
    </citation>
    <scope>NUCLEOTIDE SEQUENCE [LARGE SCALE GENOMIC DNA]</scope>
    <source>
        <strain>DSM 24528 / JCM 14929 / IAM 14863 / T</strain>
    </source>
</reference>
<protein>
    <recommendedName>
        <fullName evidence="1">Carbamoyl phosphate synthase large chain</fullName>
        <ecNumber evidence="1">6.3.4.16</ecNumber>
        <ecNumber evidence="1">6.3.5.5</ecNumber>
    </recommendedName>
    <alternativeName>
        <fullName evidence="1">Carbamoyl phosphate synthetase ammonia chain</fullName>
    </alternativeName>
</protein>
<feature type="chain" id="PRO_1000066390" description="Carbamoyl phosphate synthase large chain">
    <location>
        <begin position="1"/>
        <end position="1084"/>
    </location>
</feature>
<feature type="domain" description="ATP-grasp 1" evidence="1">
    <location>
        <begin position="133"/>
        <end position="327"/>
    </location>
</feature>
<feature type="domain" description="ATP-grasp 2" evidence="1">
    <location>
        <begin position="672"/>
        <end position="862"/>
    </location>
</feature>
<feature type="domain" description="MGS-like" evidence="1">
    <location>
        <begin position="948"/>
        <end position="1084"/>
    </location>
</feature>
<feature type="region of interest" description="Carboxyphosphate synthetic domain" evidence="1">
    <location>
        <begin position="1"/>
        <end position="401"/>
    </location>
</feature>
<feature type="region of interest" description="Oligomerization domain" evidence="1">
    <location>
        <begin position="402"/>
        <end position="546"/>
    </location>
</feature>
<feature type="region of interest" description="Carbamoyl phosphate synthetic domain" evidence="1">
    <location>
        <begin position="547"/>
        <end position="947"/>
    </location>
</feature>
<feature type="region of interest" description="Allosteric domain" evidence="1">
    <location>
        <begin position="948"/>
        <end position="1084"/>
    </location>
</feature>
<feature type="binding site" evidence="1">
    <location>
        <position position="129"/>
    </location>
    <ligand>
        <name>ATP</name>
        <dbReference type="ChEBI" id="CHEBI:30616"/>
        <label>1</label>
    </ligand>
</feature>
<feature type="binding site" evidence="1">
    <location>
        <position position="169"/>
    </location>
    <ligand>
        <name>ATP</name>
        <dbReference type="ChEBI" id="CHEBI:30616"/>
        <label>1</label>
    </ligand>
</feature>
<feature type="binding site" evidence="1">
    <location>
        <position position="175"/>
    </location>
    <ligand>
        <name>ATP</name>
        <dbReference type="ChEBI" id="CHEBI:30616"/>
        <label>1</label>
    </ligand>
</feature>
<feature type="binding site" evidence="1">
    <location>
        <position position="176"/>
    </location>
    <ligand>
        <name>ATP</name>
        <dbReference type="ChEBI" id="CHEBI:30616"/>
        <label>1</label>
    </ligand>
</feature>
<feature type="binding site" evidence="1">
    <location>
        <position position="208"/>
    </location>
    <ligand>
        <name>ATP</name>
        <dbReference type="ChEBI" id="CHEBI:30616"/>
        <label>1</label>
    </ligand>
</feature>
<feature type="binding site" evidence="1">
    <location>
        <position position="210"/>
    </location>
    <ligand>
        <name>ATP</name>
        <dbReference type="ChEBI" id="CHEBI:30616"/>
        <label>1</label>
    </ligand>
</feature>
<feature type="binding site" evidence="1">
    <location>
        <position position="215"/>
    </location>
    <ligand>
        <name>ATP</name>
        <dbReference type="ChEBI" id="CHEBI:30616"/>
        <label>1</label>
    </ligand>
</feature>
<feature type="binding site" evidence="1">
    <location>
        <position position="241"/>
    </location>
    <ligand>
        <name>ATP</name>
        <dbReference type="ChEBI" id="CHEBI:30616"/>
        <label>1</label>
    </ligand>
</feature>
<feature type="binding site" evidence="1">
    <location>
        <position position="242"/>
    </location>
    <ligand>
        <name>ATP</name>
        <dbReference type="ChEBI" id="CHEBI:30616"/>
        <label>1</label>
    </ligand>
</feature>
<feature type="binding site" evidence="1">
    <location>
        <position position="243"/>
    </location>
    <ligand>
        <name>ATP</name>
        <dbReference type="ChEBI" id="CHEBI:30616"/>
        <label>1</label>
    </ligand>
</feature>
<feature type="binding site" evidence="1">
    <location>
        <position position="284"/>
    </location>
    <ligand>
        <name>ATP</name>
        <dbReference type="ChEBI" id="CHEBI:30616"/>
        <label>1</label>
    </ligand>
</feature>
<feature type="binding site" evidence="1">
    <location>
        <position position="284"/>
    </location>
    <ligand>
        <name>Mg(2+)</name>
        <dbReference type="ChEBI" id="CHEBI:18420"/>
        <label>1</label>
    </ligand>
</feature>
<feature type="binding site" evidence="1">
    <location>
        <position position="284"/>
    </location>
    <ligand>
        <name>Mn(2+)</name>
        <dbReference type="ChEBI" id="CHEBI:29035"/>
        <label>1</label>
    </ligand>
</feature>
<feature type="binding site" evidence="1">
    <location>
        <position position="298"/>
    </location>
    <ligand>
        <name>ATP</name>
        <dbReference type="ChEBI" id="CHEBI:30616"/>
        <label>1</label>
    </ligand>
</feature>
<feature type="binding site" evidence="1">
    <location>
        <position position="298"/>
    </location>
    <ligand>
        <name>Mg(2+)</name>
        <dbReference type="ChEBI" id="CHEBI:18420"/>
        <label>1</label>
    </ligand>
</feature>
<feature type="binding site" evidence="1">
    <location>
        <position position="298"/>
    </location>
    <ligand>
        <name>Mg(2+)</name>
        <dbReference type="ChEBI" id="CHEBI:18420"/>
        <label>2</label>
    </ligand>
</feature>
<feature type="binding site" evidence="1">
    <location>
        <position position="298"/>
    </location>
    <ligand>
        <name>Mn(2+)</name>
        <dbReference type="ChEBI" id="CHEBI:29035"/>
        <label>1</label>
    </ligand>
</feature>
<feature type="binding site" evidence="1">
    <location>
        <position position="298"/>
    </location>
    <ligand>
        <name>Mn(2+)</name>
        <dbReference type="ChEBI" id="CHEBI:29035"/>
        <label>2</label>
    </ligand>
</feature>
<feature type="binding site" evidence="1">
    <location>
        <position position="300"/>
    </location>
    <ligand>
        <name>Mg(2+)</name>
        <dbReference type="ChEBI" id="CHEBI:18420"/>
        <label>2</label>
    </ligand>
</feature>
<feature type="binding site" evidence="1">
    <location>
        <position position="300"/>
    </location>
    <ligand>
        <name>Mn(2+)</name>
        <dbReference type="ChEBI" id="CHEBI:29035"/>
        <label>2</label>
    </ligand>
</feature>
<feature type="binding site" evidence="1">
    <location>
        <position position="708"/>
    </location>
    <ligand>
        <name>ATP</name>
        <dbReference type="ChEBI" id="CHEBI:30616"/>
        <label>2</label>
    </ligand>
</feature>
<feature type="binding site" evidence="1">
    <location>
        <position position="747"/>
    </location>
    <ligand>
        <name>ATP</name>
        <dbReference type="ChEBI" id="CHEBI:30616"/>
        <label>2</label>
    </ligand>
</feature>
<feature type="binding site" evidence="1">
    <location>
        <position position="753"/>
    </location>
    <ligand>
        <name>ATP</name>
        <dbReference type="ChEBI" id="CHEBI:30616"/>
        <label>2</label>
    </ligand>
</feature>
<feature type="binding site" evidence="1">
    <location>
        <position position="778"/>
    </location>
    <ligand>
        <name>ATP</name>
        <dbReference type="ChEBI" id="CHEBI:30616"/>
        <label>2</label>
    </ligand>
</feature>
<feature type="binding site" evidence="1">
    <location>
        <position position="779"/>
    </location>
    <ligand>
        <name>ATP</name>
        <dbReference type="ChEBI" id="CHEBI:30616"/>
        <label>2</label>
    </ligand>
</feature>
<feature type="binding site" evidence="1">
    <location>
        <position position="780"/>
    </location>
    <ligand>
        <name>ATP</name>
        <dbReference type="ChEBI" id="CHEBI:30616"/>
        <label>2</label>
    </ligand>
</feature>
<feature type="binding site" evidence="1">
    <location>
        <position position="781"/>
    </location>
    <ligand>
        <name>ATP</name>
        <dbReference type="ChEBI" id="CHEBI:30616"/>
        <label>2</label>
    </ligand>
</feature>
<feature type="binding site" evidence="1">
    <location>
        <position position="821"/>
    </location>
    <ligand>
        <name>ATP</name>
        <dbReference type="ChEBI" id="CHEBI:30616"/>
        <label>2</label>
    </ligand>
</feature>
<feature type="binding site" evidence="1">
    <location>
        <position position="821"/>
    </location>
    <ligand>
        <name>Mg(2+)</name>
        <dbReference type="ChEBI" id="CHEBI:18420"/>
        <label>3</label>
    </ligand>
</feature>
<feature type="binding site" evidence="1">
    <location>
        <position position="821"/>
    </location>
    <ligand>
        <name>Mn(2+)</name>
        <dbReference type="ChEBI" id="CHEBI:29035"/>
        <label>3</label>
    </ligand>
</feature>
<feature type="binding site" evidence="1">
    <location>
        <position position="833"/>
    </location>
    <ligand>
        <name>ATP</name>
        <dbReference type="ChEBI" id="CHEBI:30616"/>
        <label>2</label>
    </ligand>
</feature>
<feature type="binding site" evidence="1">
    <location>
        <position position="833"/>
    </location>
    <ligand>
        <name>Mg(2+)</name>
        <dbReference type="ChEBI" id="CHEBI:18420"/>
        <label>3</label>
    </ligand>
</feature>
<feature type="binding site" evidence="1">
    <location>
        <position position="833"/>
    </location>
    <ligand>
        <name>Mg(2+)</name>
        <dbReference type="ChEBI" id="CHEBI:18420"/>
        <label>4</label>
    </ligand>
</feature>
<feature type="binding site" evidence="1">
    <location>
        <position position="833"/>
    </location>
    <ligand>
        <name>Mn(2+)</name>
        <dbReference type="ChEBI" id="CHEBI:29035"/>
        <label>3</label>
    </ligand>
</feature>
<feature type="binding site" evidence="1">
    <location>
        <position position="833"/>
    </location>
    <ligand>
        <name>Mn(2+)</name>
        <dbReference type="ChEBI" id="CHEBI:29035"/>
        <label>4</label>
    </ligand>
</feature>
<feature type="binding site" evidence="1">
    <location>
        <position position="835"/>
    </location>
    <ligand>
        <name>Mg(2+)</name>
        <dbReference type="ChEBI" id="CHEBI:18420"/>
        <label>4</label>
    </ligand>
</feature>
<feature type="binding site" evidence="1">
    <location>
        <position position="835"/>
    </location>
    <ligand>
        <name>Mn(2+)</name>
        <dbReference type="ChEBI" id="CHEBI:29035"/>
        <label>4</label>
    </ligand>
</feature>
<name>CARB_SYMTH</name>
<gene>
    <name evidence="1" type="primary">carB</name>
    <name type="ordered locus">STH1204</name>
</gene>
<keyword id="KW-0028">Amino-acid biosynthesis</keyword>
<keyword id="KW-0055">Arginine biosynthesis</keyword>
<keyword id="KW-0067">ATP-binding</keyword>
<keyword id="KW-0436">Ligase</keyword>
<keyword id="KW-0460">Magnesium</keyword>
<keyword id="KW-0464">Manganese</keyword>
<keyword id="KW-0479">Metal-binding</keyword>
<keyword id="KW-0547">Nucleotide-binding</keyword>
<keyword id="KW-0665">Pyrimidine biosynthesis</keyword>
<keyword id="KW-1185">Reference proteome</keyword>
<keyword id="KW-0677">Repeat</keyword>
<comment type="function">
    <text evidence="1">Large subunit of the glutamine-dependent carbamoyl phosphate synthetase (CPSase). CPSase catalyzes the formation of carbamoyl phosphate from the ammonia moiety of glutamine, carbonate, and phosphate donated by ATP, constituting the first step of 2 biosynthetic pathways, one leading to arginine and/or urea and the other to pyrimidine nucleotides. The large subunit (synthetase) binds the substrates ammonia (free or transferred from glutamine from the small subunit), hydrogencarbonate and ATP and carries out an ATP-coupled ligase reaction, activating hydrogencarbonate by forming carboxy phosphate which reacts with ammonia to form carbamoyl phosphate.</text>
</comment>
<comment type="catalytic activity">
    <reaction evidence="1">
        <text>hydrogencarbonate + L-glutamine + 2 ATP + H2O = carbamoyl phosphate + L-glutamate + 2 ADP + phosphate + 2 H(+)</text>
        <dbReference type="Rhea" id="RHEA:18633"/>
        <dbReference type="ChEBI" id="CHEBI:15377"/>
        <dbReference type="ChEBI" id="CHEBI:15378"/>
        <dbReference type="ChEBI" id="CHEBI:17544"/>
        <dbReference type="ChEBI" id="CHEBI:29985"/>
        <dbReference type="ChEBI" id="CHEBI:30616"/>
        <dbReference type="ChEBI" id="CHEBI:43474"/>
        <dbReference type="ChEBI" id="CHEBI:58228"/>
        <dbReference type="ChEBI" id="CHEBI:58359"/>
        <dbReference type="ChEBI" id="CHEBI:456216"/>
        <dbReference type="EC" id="6.3.5.5"/>
    </reaction>
</comment>
<comment type="catalytic activity">
    <molecule>Carbamoyl phosphate synthase large chain</molecule>
    <reaction evidence="1">
        <text>hydrogencarbonate + NH4(+) + 2 ATP = carbamoyl phosphate + 2 ADP + phosphate + 2 H(+)</text>
        <dbReference type="Rhea" id="RHEA:18029"/>
        <dbReference type="ChEBI" id="CHEBI:15378"/>
        <dbReference type="ChEBI" id="CHEBI:17544"/>
        <dbReference type="ChEBI" id="CHEBI:28938"/>
        <dbReference type="ChEBI" id="CHEBI:30616"/>
        <dbReference type="ChEBI" id="CHEBI:43474"/>
        <dbReference type="ChEBI" id="CHEBI:58228"/>
        <dbReference type="ChEBI" id="CHEBI:456216"/>
        <dbReference type="EC" id="6.3.4.16"/>
    </reaction>
</comment>
<comment type="cofactor">
    <cofactor evidence="1">
        <name>Mg(2+)</name>
        <dbReference type="ChEBI" id="CHEBI:18420"/>
    </cofactor>
    <cofactor evidence="1">
        <name>Mn(2+)</name>
        <dbReference type="ChEBI" id="CHEBI:29035"/>
    </cofactor>
    <text evidence="1">Binds 4 Mg(2+) or Mn(2+) ions per subunit.</text>
</comment>
<comment type="pathway">
    <text evidence="1">Amino-acid biosynthesis; L-arginine biosynthesis; carbamoyl phosphate from bicarbonate: step 1/1.</text>
</comment>
<comment type="pathway">
    <text evidence="1">Pyrimidine metabolism; UMP biosynthesis via de novo pathway; (S)-dihydroorotate from bicarbonate: step 1/3.</text>
</comment>
<comment type="subunit">
    <text evidence="1">Composed of two chains; the small (or glutamine) chain promotes the hydrolysis of glutamine to ammonia, which is used by the large (or ammonia) chain to synthesize carbamoyl phosphate. Tetramer of heterodimers (alpha,beta)4.</text>
</comment>
<comment type="domain">
    <text evidence="1">The large subunit is composed of 2 ATP-grasp domains that are involved in binding the 2 ATP molecules needed for carbamoyl phosphate synthesis. The N-terminal ATP-grasp domain (referred to as the carboxyphosphate synthetic component) catalyzes the ATP-dependent phosphorylation of hydrogencarbonate to carboxyphosphate and the subsequent nucleophilic attack by ammonia to form a carbamate intermediate. The C-terminal ATP-grasp domain (referred to as the carbamoyl phosphate synthetic component) then catalyzes the phosphorylation of carbamate with the second ATP to form the end product carbamoyl phosphate. The reactive and unstable enzyme intermediates are sequentially channeled from one active site to the next through the interior of the protein over a distance of at least 96 A.</text>
</comment>
<comment type="similarity">
    <text evidence="1">Belongs to the CarB family.</text>
</comment>
<sequence length="1084" mass="117750">MPRRQDVEKVLVIGSGPIVIGQAAEFDYAGTQACQALREEGLRVVLINSNPATIMTDRHVADRVYIEPITPEFVERVIARERPQGLLPTLGGQVGLNMAMQLEEAGVLARYGVRLLGTPLTAIRRAEDRAEFRALMKEIGEPVPESAIVTTPEEALAFGEEVGYPLIVRPAYTLGGTGGGIAHDREEMRDIVTRGLKLSPVTQCLVERSLLGWKEIEYEVMRDGAGNAITICSMENIDPVGVHTGDSIVVAPSQTLTDREHQILRSAALKIIDALGIEGGCNVQFALNPHAREYMVIEVNPRVSRSSALASKATGYPIAKVAAKIAVGLRLDEIRNPVTGTTYAAFEPALDYCVIKIPRFPFDKFTTADRTLGTQMKATGEVMAIDRTFPGALLKAVRSLETGRDGLFHPAVQALDDQALRERLRTPNDERLWAVAEALRRGVTVPEIHALSAIDPFFLDGIAAIVAMERELADGPLTAERMRRAKQLGFSDAAIGRIVGMDPLAVRRLRLEMGVRPVFKMVDSCAGEFPAATPYYYSCYDEENEAVSPPGRKAVVLGSGPIRIGQGIEFDYSAVHAAWELKAEGIQSIVINNNPETVSTDFDTSDRLYFEPLTLEDVLNVVEQEGDIEGVICQFGGQTAINLAVPLSRAGVRVLGTDIDQMDRAEDRRRFDQLLSDLSIPRPPGGTATSVEEAVAVARRIGYPVLVRPSFVLGGRAMEIVHDEAELRAYMREAIAVSSDRPVLVDRYFLGKEVEVDCVSDGEQVIIAGIMEHLERAGVHSGDSIAVYPTVTLTHRQRETIVAYSTRLALALQVKGLVNIQYVIHGGEIYVIEVNPRSSRTVPFLTKVTGLELAKVATQVIAGHTLAELGYDPDRSGAALVFRTPAGAGWLWPEPAERVAVKAPVFSWQKLTQVDTALSPEMKSTGEVLGVDADLPRALYKALLASGVRVPHRGTVLFTVADRDKAEAMGLARQFSDLGYRIVATTGTARALQACAIPAERVNKVSEGAPAIPDLIRAGKIDLVINTLTRGRDAHRDGFIIRRTAVEHGVPTLTSLDTARAVLTVLSSLREGEEVGISAVQDWV</sequence>
<organism>
    <name type="scientific">Symbiobacterium thermophilum (strain DSM 24528 / JCM 14929 / IAM 14863 / T)</name>
    <dbReference type="NCBI Taxonomy" id="292459"/>
    <lineage>
        <taxon>Bacteria</taxon>
        <taxon>Bacillati</taxon>
        <taxon>Bacillota</taxon>
        <taxon>Clostridia</taxon>
        <taxon>Eubacteriales</taxon>
        <taxon>Symbiobacteriaceae</taxon>
        <taxon>Symbiobacterium</taxon>
    </lineage>
</organism>
<proteinExistence type="inferred from homology"/>
<dbReference type="EC" id="6.3.4.16" evidence="1"/>
<dbReference type="EC" id="6.3.5.5" evidence="1"/>
<dbReference type="EMBL" id="AP006840">
    <property type="protein sequence ID" value="BAD40189.1"/>
    <property type="molecule type" value="Genomic_DNA"/>
</dbReference>
<dbReference type="RefSeq" id="WP_011195335.1">
    <property type="nucleotide sequence ID" value="NC_006177.1"/>
</dbReference>
<dbReference type="SMR" id="Q67Q54"/>
<dbReference type="STRING" id="292459.STH1204"/>
<dbReference type="KEGG" id="sth:STH1204"/>
<dbReference type="eggNOG" id="COG0458">
    <property type="taxonomic scope" value="Bacteria"/>
</dbReference>
<dbReference type="HOGENOM" id="CLU_000513_1_2_9"/>
<dbReference type="OrthoDB" id="9804197at2"/>
<dbReference type="UniPathway" id="UPA00068">
    <property type="reaction ID" value="UER00171"/>
</dbReference>
<dbReference type="UniPathway" id="UPA00070">
    <property type="reaction ID" value="UER00115"/>
</dbReference>
<dbReference type="Proteomes" id="UP000000417">
    <property type="component" value="Chromosome"/>
</dbReference>
<dbReference type="GO" id="GO:0005737">
    <property type="term" value="C:cytoplasm"/>
    <property type="evidence" value="ECO:0007669"/>
    <property type="project" value="TreeGrafter"/>
</dbReference>
<dbReference type="GO" id="GO:0005524">
    <property type="term" value="F:ATP binding"/>
    <property type="evidence" value="ECO:0007669"/>
    <property type="project" value="UniProtKB-UniRule"/>
</dbReference>
<dbReference type="GO" id="GO:0004087">
    <property type="term" value="F:carbamoyl-phosphate synthase (ammonia) activity"/>
    <property type="evidence" value="ECO:0007669"/>
    <property type="project" value="RHEA"/>
</dbReference>
<dbReference type="GO" id="GO:0004088">
    <property type="term" value="F:carbamoyl-phosphate synthase (glutamine-hydrolyzing) activity"/>
    <property type="evidence" value="ECO:0007669"/>
    <property type="project" value="UniProtKB-UniRule"/>
</dbReference>
<dbReference type="GO" id="GO:0046872">
    <property type="term" value="F:metal ion binding"/>
    <property type="evidence" value="ECO:0007669"/>
    <property type="project" value="UniProtKB-KW"/>
</dbReference>
<dbReference type="GO" id="GO:0044205">
    <property type="term" value="P:'de novo' UMP biosynthetic process"/>
    <property type="evidence" value="ECO:0007669"/>
    <property type="project" value="UniProtKB-UniRule"/>
</dbReference>
<dbReference type="GO" id="GO:0006541">
    <property type="term" value="P:glutamine metabolic process"/>
    <property type="evidence" value="ECO:0007669"/>
    <property type="project" value="TreeGrafter"/>
</dbReference>
<dbReference type="GO" id="GO:0006526">
    <property type="term" value="P:L-arginine biosynthetic process"/>
    <property type="evidence" value="ECO:0007669"/>
    <property type="project" value="UniProtKB-UniRule"/>
</dbReference>
<dbReference type="CDD" id="cd01424">
    <property type="entry name" value="MGS_CPS_II"/>
    <property type="match status" value="1"/>
</dbReference>
<dbReference type="FunFam" id="1.10.1030.10:FF:000002">
    <property type="entry name" value="Carbamoyl-phosphate synthase large chain"/>
    <property type="match status" value="1"/>
</dbReference>
<dbReference type="FunFam" id="3.30.1490.20:FF:000001">
    <property type="entry name" value="Carbamoyl-phosphate synthase large chain"/>
    <property type="match status" value="1"/>
</dbReference>
<dbReference type="FunFam" id="3.30.470.20:FF:000001">
    <property type="entry name" value="Carbamoyl-phosphate synthase large chain"/>
    <property type="match status" value="1"/>
</dbReference>
<dbReference type="FunFam" id="3.30.470.20:FF:000026">
    <property type="entry name" value="Carbamoyl-phosphate synthase large chain"/>
    <property type="match status" value="1"/>
</dbReference>
<dbReference type="FunFam" id="3.40.50.20:FF:000001">
    <property type="entry name" value="Carbamoyl-phosphate synthase large chain"/>
    <property type="match status" value="1"/>
</dbReference>
<dbReference type="FunFam" id="3.40.50.20:FF:000002">
    <property type="entry name" value="Carbamoyl-phosphate synthase large chain"/>
    <property type="match status" value="1"/>
</dbReference>
<dbReference type="Gene3D" id="3.40.50.20">
    <property type="match status" value="2"/>
</dbReference>
<dbReference type="Gene3D" id="3.30.1490.20">
    <property type="entry name" value="ATP-grasp fold, A domain"/>
    <property type="match status" value="1"/>
</dbReference>
<dbReference type="Gene3D" id="3.30.470.20">
    <property type="entry name" value="ATP-grasp fold, B domain"/>
    <property type="match status" value="2"/>
</dbReference>
<dbReference type="Gene3D" id="1.10.1030.10">
    <property type="entry name" value="Carbamoyl-phosphate synthetase, large subunit oligomerisation domain"/>
    <property type="match status" value="1"/>
</dbReference>
<dbReference type="Gene3D" id="3.40.50.1380">
    <property type="entry name" value="Methylglyoxal synthase-like domain"/>
    <property type="match status" value="1"/>
</dbReference>
<dbReference type="HAMAP" id="MF_01210_A">
    <property type="entry name" value="CPSase_L_chain_A"/>
    <property type="match status" value="1"/>
</dbReference>
<dbReference type="HAMAP" id="MF_01210_B">
    <property type="entry name" value="CPSase_L_chain_B"/>
    <property type="match status" value="1"/>
</dbReference>
<dbReference type="InterPro" id="IPR011761">
    <property type="entry name" value="ATP-grasp"/>
</dbReference>
<dbReference type="InterPro" id="IPR013815">
    <property type="entry name" value="ATP_grasp_subdomain_1"/>
</dbReference>
<dbReference type="InterPro" id="IPR006275">
    <property type="entry name" value="CarbamoylP_synth_lsu"/>
</dbReference>
<dbReference type="InterPro" id="IPR005480">
    <property type="entry name" value="CarbamoylP_synth_lsu_oligo"/>
</dbReference>
<dbReference type="InterPro" id="IPR036897">
    <property type="entry name" value="CarbamoylP_synth_lsu_oligo_sf"/>
</dbReference>
<dbReference type="InterPro" id="IPR005479">
    <property type="entry name" value="CbamoylP_synth_lsu-like_ATP-bd"/>
</dbReference>
<dbReference type="InterPro" id="IPR005483">
    <property type="entry name" value="CbamoylP_synth_lsu_CPSase_dom"/>
</dbReference>
<dbReference type="InterPro" id="IPR011607">
    <property type="entry name" value="MGS-like_dom"/>
</dbReference>
<dbReference type="InterPro" id="IPR036914">
    <property type="entry name" value="MGS-like_dom_sf"/>
</dbReference>
<dbReference type="InterPro" id="IPR033937">
    <property type="entry name" value="MGS_CPS_CarB"/>
</dbReference>
<dbReference type="InterPro" id="IPR016185">
    <property type="entry name" value="PreATP-grasp_dom_sf"/>
</dbReference>
<dbReference type="NCBIfam" id="TIGR01369">
    <property type="entry name" value="CPSaseII_lrg"/>
    <property type="match status" value="1"/>
</dbReference>
<dbReference type="NCBIfam" id="NF003671">
    <property type="entry name" value="PRK05294.1"/>
    <property type="match status" value="1"/>
</dbReference>
<dbReference type="NCBIfam" id="NF009455">
    <property type="entry name" value="PRK12815.1"/>
    <property type="match status" value="1"/>
</dbReference>
<dbReference type="PANTHER" id="PTHR11405:SF53">
    <property type="entry name" value="CARBAMOYL-PHOSPHATE SYNTHASE [AMMONIA], MITOCHONDRIAL"/>
    <property type="match status" value="1"/>
</dbReference>
<dbReference type="PANTHER" id="PTHR11405">
    <property type="entry name" value="CARBAMOYLTRANSFERASE FAMILY MEMBER"/>
    <property type="match status" value="1"/>
</dbReference>
<dbReference type="Pfam" id="PF02786">
    <property type="entry name" value="CPSase_L_D2"/>
    <property type="match status" value="2"/>
</dbReference>
<dbReference type="Pfam" id="PF02787">
    <property type="entry name" value="CPSase_L_D3"/>
    <property type="match status" value="1"/>
</dbReference>
<dbReference type="Pfam" id="PF02142">
    <property type="entry name" value="MGS"/>
    <property type="match status" value="1"/>
</dbReference>
<dbReference type="PRINTS" id="PR00098">
    <property type="entry name" value="CPSASE"/>
</dbReference>
<dbReference type="SMART" id="SM01096">
    <property type="entry name" value="CPSase_L_D3"/>
    <property type="match status" value="1"/>
</dbReference>
<dbReference type="SMART" id="SM00851">
    <property type="entry name" value="MGS"/>
    <property type="match status" value="1"/>
</dbReference>
<dbReference type="SUPFAM" id="SSF48108">
    <property type="entry name" value="Carbamoyl phosphate synthetase, large subunit connection domain"/>
    <property type="match status" value="1"/>
</dbReference>
<dbReference type="SUPFAM" id="SSF56059">
    <property type="entry name" value="Glutathione synthetase ATP-binding domain-like"/>
    <property type="match status" value="2"/>
</dbReference>
<dbReference type="SUPFAM" id="SSF52335">
    <property type="entry name" value="Methylglyoxal synthase-like"/>
    <property type="match status" value="1"/>
</dbReference>
<dbReference type="SUPFAM" id="SSF52440">
    <property type="entry name" value="PreATP-grasp domain"/>
    <property type="match status" value="2"/>
</dbReference>
<dbReference type="PROSITE" id="PS50975">
    <property type="entry name" value="ATP_GRASP"/>
    <property type="match status" value="2"/>
</dbReference>
<dbReference type="PROSITE" id="PS00866">
    <property type="entry name" value="CPSASE_1"/>
    <property type="match status" value="2"/>
</dbReference>
<dbReference type="PROSITE" id="PS00867">
    <property type="entry name" value="CPSASE_2"/>
    <property type="match status" value="2"/>
</dbReference>
<dbReference type="PROSITE" id="PS51855">
    <property type="entry name" value="MGS"/>
    <property type="match status" value="1"/>
</dbReference>